<keyword id="KW-0963">Cytoplasm</keyword>
<keyword id="KW-0274">FAD</keyword>
<keyword id="KW-0285">Flavoprotein</keyword>
<keyword id="KW-0489">Methyltransferase</keyword>
<keyword id="KW-0520">NAD</keyword>
<keyword id="KW-0521">NADP</keyword>
<keyword id="KW-0808">Transferase</keyword>
<keyword id="KW-0819">tRNA processing</keyword>
<protein>
    <recommendedName>
        <fullName evidence="1">Methylenetetrahydrofolate--tRNA-(uracil-5-)-methyltransferase TrmFO</fullName>
        <ecNumber evidence="1">2.1.1.74</ecNumber>
    </recommendedName>
    <alternativeName>
        <fullName evidence="1">Folate-dependent tRNA (uracil-5-)-methyltransferase</fullName>
    </alternativeName>
    <alternativeName>
        <fullName evidence="1">Folate-dependent tRNA(M-5-U54)-methyltransferase</fullName>
    </alternativeName>
</protein>
<evidence type="ECO:0000255" key="1">
    <source>
        <dbReference type="HAMAP-Rule" id="MF_01037"/>
    </source>
</evidence>
<sequence length="482" mass="51560">MTTITTAAIIGAGLAGCECALRLARAGVRVTLFEMKPAAFSPAHSNPDLGELVCSNSLRSDDIASGVGLLKQEMRELGSIVMEAADATRVPAGKALAVDRDLFARHITAVIEAEPGITLERREVASLDDPALASADVVVVAAGPLASAGLSDSLAAMVGGQLYFYDAIAPIIAAESIDLSIAFSGSRYGEPGEEGDYLNCPMNRDEYDAFYEALLAAEKVPSRDFEKELHFEGCMPIEALAERGPRTLVFGPFKPVGFTDPRTGTRPYAIIQLRAENRNKTAFNIVGCQTKLKYAEQERVFRMIPGLAGAEFVRHGSVHRNTYVNAPRVLADDLSLRADKRVFLAGQITGVEGYVESAACGMWLGMVLAARIQGRELPTPPPQTALGALLMHLRTPVKNFQPSNANFGLMPELGLKVKKRERKPLYSARAREHFVRWLAEAGVTPVIEPLLPTAPDAADATGAIDTTGATGAAREETAPTEA</sequence>
<organism>
    <name type="scientific">Nitratidesulfovibrio vulgaris (strain DP4)</name>
    <name type="common">Desulfovibrio vulgaris</name>
    <dbReference type="NCBI Taxonomy" id="391774"/>
    <lineage>
        <taxon>Bacteria</taxon>
        <taxon>Pseudomonadati</taxon>
        <taxon>Thermodesulfobacteriota</taxon>
        <taxon>Desulfovibrionia</taxon>
        <taxon>Desulfovibrionales</taxon>
        <taxon>Desulfovibrionaceae</taxon>
        <taxon>Nitratidesulfovibrio</taxon>
    </lineage>
</organism>
<comment type="function">
    <text evidence="1">Catalyzes the folate-dependent formation of 5-methyl-uridine at position 54 (M-5-U54) in all tRNAs.</text>
</comment>
<comment type="catalytic activity">
    <reaction evidence="1">
        <text>uridine(54) in tRNA + (6R)-5,10-methylene-5,6,7,8-tetrahydrofolate + NADH + H(+) = 5-methyluridine(54) in tRNA + (6S)-5,6,7,8-tetrahydrofolate + NAD(+)</text>
        <dbReference type="Rhea" id="RHEA:16873"/>
        <dbReference type="Rhea" id="RHEA-COMP:10167"/>
        <dbReference type="Rhea" id="RHEA-COMP:10193"/>
        <dbReference type="ChEBI" id="CHEBI:15378"/>
        <dbReference type="ChEBI" id="CHEBI:15636"/>
        <dbReference type="ChEBI" id="CHEBI:57453"/>
        <dbReference type="ChEBI" id="CHEBI:57540"/>
        <dbReference type="ChEBI" id="CHEBI:57945"/>
        <dbReference type="ChEBI" id="CHEBI:65315"/>
        <dbReference type="ChEBI" id="CHEBI:74447"/>
        <dbReference type="EC" id="2.1.1.74"/>
    </reaction>
</comment>
<comment type="catalytic activity">
    <reaction evidence="1">
        <text>uridine(54) in tRNA + (6R)-5,10-methylene-5,6,7,8-tetrahydrofolate + NADPH + H(+) = 5-methyluridine(54) in tRNA + (6S)-5,6,7,8-tetrahydrofolate + NADP(+)</text>
        <dbReference type="Rhea" id="RHEA:62372"/>
        <dbReference type="Rhea" id="RHEA-COMP:10167"/>
        <dbReference type="Rhea" id="RHEA-COMP:10193"/>
        <dbReference type="ChEBI" id="CHEBI:15378"/>
        <dbReference type="ChEBI" id="CHEBI:15636"/>
        <dbReference type="ChEBI" id="CHEBI:57453"/>
        <dbReference type="ChEBI" id="CHEBI:57783"/>
        <dbReference type="ChEBI" id="CHEBI:58349"/>
        <dbReference type="ChEBI" id="CHEBI:65315"/>
        <dbReference type="ChEBI" id="CHEBI:74447"/>
        <dbReference type="EC" id="2.1.1.74"/>
    </reaction>
</comment>
<comment type="cofactor">
    <cofactor evidence="1">
        <name>FAD</name>
        <dbReference type="ChEBI" id="CHEBI:57692"/>
    </cofactor>
</comment>
<comment type="subcellular location">
    <subcellularLocation>
        <location evidence="1">Cytoplasm</location>
    </subcellularLocation>
</comment>
<comment type="similarity">
    <text evidence="1">Belongs to the MnmG family. TrmFO subfamily.</text>
</comment>
<proteinExistence type="inferred from homology"/>
<feature type="chain" id="PRO_0000346337" description="Methylenetetrahydrofolate--tRNA-(uracil-5-)-methyltransferase TrmFO">
    <location>
        <begin position="1"/>
        <end position="482"/>
    </location>
</feature>
<feature type="binding site" evidence="1">
    <location>
        <begin position="11"/>
        <end position="16"/>
    </location>
    <ligand>
        <name>FAD</name>
        <dbReference type="ChEBI" id="CHEBI:57692"/>
    </ligand>
</feature>
<gene>
    <name evidence="1" type="primary">trmFO</name>
    <name type="ordered locus">Dvul_0911</name>
</gene>
<reference key="1">
    <citation type="journal article" date="2009" name="Environ. Microbiol.">
        <title>Contribution of mobile genetic elements to Desulfovibrio vulgaris genome plasticity.</title>
        <authorList>
            <person name="Walker C.B."/>
            <person name="Stolyar S."/>
            <person name="Chivian D."/>
            <person name="Pinel N."/>
            <person name="Gabster J.A."/>
            <person name="Dehal P.S."/>
            <person name="He Z."/>
            <person name="Yang Z.K."/>
            <person name="Yen H.C."/>
            <person name="Zhou J."/>
            <person name="Wall J.D."/>
            <person name="Hazen T.C."/>
            <person name="Arkin A.P."/>
            <person name="Stahl D.A."/>
        </authorList>
    </citation>
    <scope>NUCLEOTIDE SEQUENCE [LARGE SCALE GENOMIC DNA]</scope>
    <source>
        <strain>DP4</strain>
    </source>
</reference>
<accession>A1VBW6</accession>
<dbReference type="EC" id="2.1.1.74" evidence="1"/>
<dbReference type="EMBL" id="CP000527">
    <property type="protein sequence ID" value="ABM27932.1"/>
    <property type="molecule type" value="Genomic_DNA"/>
</dbReference>
<dbReference type="RefSeq" id="WP_011791925.1">
    <property type="nucleotide sequence ID" value="NC_008751.1"/>
</dbReference>
<dbReference type="SMR" id="A1VBW6"/>
<dbReference type="KEGG" id="dvl:Dvul_0911"/>
<dbReference type="HOGENOM" id="CLU_033057_1_0_7"/>
<dbReference type="Proteomes" id="UP000009173">
    <property type="component" value="Chromosome"/>
</dbReference>
<dbReference type="GO" id="GO:0005829">
    <property type="term" value="C:cytosol"/>
    <property type="evidence" value="ECO:0007669"/>
    <property type="project" value="TreeGrafter"/>
</dbReference>
<dbReference type="GO" id="GO:0050660">
    <property type="term" value="F:flavin adenine dinucleotide binding"/>
    <property type="evidence" value="ECO:0007669"/>
    <property type="project" value="UniProtKB-UniRule"/>
</dbReference>
<dbReference type="GO" id="GO:0047151">
    <property type="term" value="F:tRNA (uracil(54)-C5)-methyltransferase activity, 5,10-methylenetetrahydrofolate-dependent"/>
    <property type="evidence" value="ECO:0007669"/>
    <property type="project" value="UniProtKB-UniRule"/>
</dbReference>
<dbReference type="GO" id="GO:0030488">
    <property type="term" value="P:tRNA methylation"/>
    <property type="evidence" value="ECO:0007669"/>
    <property type="project" value="TreeGrafter"/>
</dbReference>
<dbReference type="GO" id="GO:0002098">
    <property type="term" value="P:tRNA wobble uridine modification"/>
    <property type="evidence" value="ECO:0007669"/>
    <property type="project" value="TreeGrafter"/>
</dbReference>
<dbReference type="Gene3D" id="3.50.50.60">
    <property type="entry name" value="FAD/NAD(P)-binding domain"/>
    <property type="match status" value="2"/>
</dbReference>
<dbReference type="HAMAP" id="MF_01037">
    <property type="entry name" value="TrmFO"/>
    <property type="match status" value="1"/>
</dbReference>
<dbReference type="InterPro" id="IPR036188">
    <property type="entry name" value="FAD/NAD-bd_sf"/>
</dbReference>
<dbReference type="InterPro" id="IPR002218">
    <property type="entry name" value="MnmG-rel"/>
</dbReference>
<dbReference type="InterPro" id="IPR040131">
    <property type="entry name" value="MnmG_N"/>
</dbReference>
<dbReference type="InterPro" id="IPR004417">
    <property type="entry name" value="TrmFO"/>
</dbReference>
<dbReference type="NCBIfam" id="TIGR00137">
    <property type="entry name" value="gid_trmFO"/>
    <property type="match status" value="1"/>
</dbReference>
<dbReference type="NCBIfam" id="NF003739">
    <property type="entry name" value="PRK05335.1"/>
    <property type="match status" value="1"/>
</dbReference>
<dbReference type="PANTHER" id="PTHR11806">
    <property type="entry name" value="GLUCOSE INHIBITED DIVISION PROTEIN A"/>
    <property type="match status" value="1"/>
</dbReference>
<dbReference type="PANTHER" id="PTHR11806:SF2">
    <property type="entry name" value="METHYLENETETRAHYDROFOLATE--TRNA-(URACIL-5-)-METHYLTRANSFERASE TRMFO"/>
    <property type="match status" value="1"/>
</dbReference>
<dbReference type="Pfam" id="PF01134">
    <property type="entry name" value="GIDA"/>
    <property type="match status" value="1"/>
</dbReference>
<dbReference type="SUPFAM" id="SSF51905">
    <property type="entry name" value="FAD/NAD(P)-binding domain"/>
    <property type="match status" value="1"/>
</dbReference>
<name>TRMFO_NITV4</name>